<dbReference type="EC" id="5.2.1.8" evidence="1"/>
<dbReference type="EMBL" id="DQ489736">
    <property type="protein sequence ID" value="ACA82339.1"/>
    <property type="molecule type" value="Genomic_DNA"/>
</dbReference>
<dbReference type="RefSeq" id="WP_004904285.1">
    <property type="nucleotide sequence ID" value="NC_010471.1"/>
</dbReference>
<dbReference type="SMR" id="B1MXT7"/>
<dbReference type="STRING" id="349519.LCK_00506"/>
<dbReference type="KEGG" id="lci:LCK_00506"/>
<dbReference type="eggNOG" id="COG0544">
    <property type="taxonomic scope" value="Bacteria"/>
</dbReference>
<dbReference type="HOGENOM" id="CLU_033058_3_2_9"/>
<dbReference type="OrthoDB" id="9767721at2"/>
<dbReference type="Proteomes" id="UP000002166">
    <property type="component" value="Chromosome"/>
</dbReference>
<dbReference type="GO" id="GO:0005737">
    <property type="term" value="C:cytoplasm"/>
    <property type="evidence" value="ECO:0007669"/>
    <property type="project" value="UniProtKB-SubCell"/>
</dbReference>
<dbReference type="GO" id="GO:0003755">
    <property type="term" value="F:peptidyl-prolyl cis-trans isomerase activity"/>
    <property type="evidence" value="ECO:0007669"/>
    <property type="project" value="UniProtKB-UniRule"/>
</dbReference>
<dbReference type="GO" id="GO:0044183">
    <property type="term" value="F:protein folding chaperone"/>
    <property type="evidence" value="ECO:0007669"/>
    <property type="project" value="TreeGrafter"/>
</dbReference>
<dbReference type="GO" id="GO:0043022">
    <property type="term" value="F:ribosome binding"/>
    <property type="evidence" value="ECO:0007669"/>
    <property type="project" value="TreeGrafter"/>
</dbReference>
<dbReference type="GO" id="GO:0051083">
    <property type="term" value="P:'de novo' cotranslational protein folding"/>
    <property type="evidence" value="ECO:0007669"/>
    <property type="project" value="TreeGrafter"/>
</dbReference>
<dbReference type="GO" id="GO:0051301">
    <property type="term" value="P:cell division"/>
    <property type="evidence" value="ECO:0007669"/>
    <property type="project" value="UniProtKB-KW"/>
</dbReference>
<dbReference type="GO" id="GO:0061077">
    <property type="term" value="P:chaperone-mediated protein folding"/>
    <property type="evidence" value="ECO:0007669"/>
    <property type="project" value="TreeGrafter"/>
</dbReference>
<dbReference type="GO" id="GO:0015031">
    <property type="term" value="P:protein transport"/>
    <property type="evidence" value="ECO:0007669"/>
    <property type="project" value="UniProtKB-UniRule"/>
</dbReference>
<dbReference type="GO" id="GO:0043335">
    <property type="term" value="P:protein unfolding"/>
    <property type="evidence" value="ECO:0007669"/>
    <property type="project" value="TreeGrafter"/>
</dbReference>
<dbReference type="FunFam" id="3.10.50.40:FF:000001">
    <property type="entry name" value="Trigger factor"/>
    <property type="match status" value="1"/>
</dbReference>
<dbReference type="Gene3D" id="3.10.50.40">
    <property type="match status" value="1"/>
</dbReference>
<dbReference type="Gene3D" id="3.30.70.1050">
    <property type="entry name" value="Trigger factor ribosome-binding domain"/>
    <property type="match status" value="1"/>
</dbReference>
<dbReference type="Gene3D" id="1.10.3120.10">
    <property type="entry name" value="Trigger factor, C-terminal domain"/>
    <property type="match status" value="1"/>
</dbReference>
<dbReference type="HAMAP" id="MF_00303">
    <property type="entry name" value="Trigger_factor_Tig"/>
    <property type="match status" value="1"/>
</dbReference>
<dbReference type="InterPro" id="IPR046357">
    <property type="entry name" value="PPIase_dom_sf"/>
</dbReference>
<dbReference type="InterPro" id="IPR001179">
    <property type="entry name" value="PPIase_FKBP_dom"/>
</dbReference>
<dbReference type="InterPro" id="IPR005215">
    <property type="entry name" value="Trig_fac"/>
</dbReference>
<dbReference type="InterPro" id="IPR008880">
    <property type="entry name" value="Trigger_fac_C"/>
</dbReference>
<dbReference type="InterPro" id="IPR037041">
    <property type="entry name" value="Trigger_fac_C_sf"/>
</dbReference>
<dbReference type="InterPro" id="IPR008881">
    <property type="entry name" value="Trigger_fac_ribosome-bd_bac"/>
</dbReference>
<dbReference type="InterPro" id="IPR036611">
    <property type="entry name" value="Trigger_fac_ribosome-bd_sf"/>
</dbReference>
<dbReference type="InterPro" id="IPR027304">
    <property type="entry name" value="Trigger_fact/SurA_dom_sf"/>
</dbReference>
<dbReference type="NCBIfam" id="TIGR00115">
    <property type="entry name" value="tig"/>
    <property type="match status" value="1"/>
</dbReference>
<dbReference type="PANTHER" id="PTHR30560">
    <property type="entry name" value="TRIGGER FACTOR CHAPERONE AND PEPTIDYL-PROLYL CIS/TRANS ISOMERASE"/>
    <property type="match status" value="1"/>
</dbReference>
<dbReference type="PANTHER" id="PTHR30560:SF3">
    <property type="entry name" value="TRIGGER FACTOR-LIKE PROTEIN TIG, CHLOROPLASTIC"/>
    <property type="match status" value="1"/>
</dbReference>
<dbReference type="Pfam" id="PF00254">
    <property type="entry name" value="FKBP_C"/>
    <property type="match status" value="1"/>
</dbReference>
<dbReference type="Pfam" id="PF05698">
    <property type="entry name" value="Trigger_C"/>
    <property type="match status" value="1"/>
</dbReference>
<dbReference type="Pfam" id="PF05697">
    <property type="entry name" value="Trigger_N"/>
    <property type="match status" value="1"/>
</dbReference>
<dbReference type="PIRSF" id="PIRSF003095">
    <property type="entry name" value="Trigger_factor"/>
    <property type="match status" value="1"/>
</dbReference>
<dbReference type="SUPFAM" id="SSF54534">
    <property type="entry name" value="FKBP-like"/>
    <property type="match status" value="1"/>
</dbReference>
<dbReference type="SUPFAM" id="SSF109998">
    <property type="entry name" value="Triger factor/SurA peptide-binding domain-like"/>
    <property type="match status" value="1"/>
</dbReference>
<dbReference type="SUPFAM" id="SSF102735">
    <property type="entry name" value="Trigger factor ribosome-binding domain"/>
    <property type="match status" value="1"/>
</dbReference>
<dbReference type="PROSITE" id="PS50059">
    <property type="entry name" value="FKBP_PPIASE"/>
    <property type="match status" value="1"/>
</dbReference>
<comment type="function">
    <text evidence="1">Involved in protein export. Acts as a chaperone by maintaining the newly synthesized protein in an open conformation. Functions as a peptidyl-prolyl cis-trans isomerase.</text>
</comment>
<comment type="catalytic activity">
    <reaction evidence="1">
        <text>[protein]-peptidylproline (omega=180) = [protein]-peptidylproline (omega=0)</text>
        <dbReference type="Rhea" id="RHEA:16237"/>
        <dbReference type="Rhea" id="RHEA-COMP:10747"/>
        <dbReference type="Rhea" id="RHEA-COMP:10748"/>
        <dbReference type="ChEBI" id="CHEBI:83833"/>
        <dbReference type="ChEBI" id="CHEBI:83834"/>
        <dbReference type="EC" id="5.2.1.8"/>
    </reaction>
</comment>
<comment type="subcellular location">
    <subcellularLocation>
        <location>Cytoplasm</location>
    </subcellularLocation>
    <text evidence="1">About half TF is bound to the ribosome near the polypeptide exit tunnel while the other half is free in the cytoplasm.</text>
</comment>
<comment type="domain">
    <text evidence="1">Consists of 3 domains; the N-terminus binds the ribosome, the middle domain has PPIase activity, while the C-terminus has intrinsic chaperone activity on its own.</text>
</comment>
<comment type="similarity">
    <text evidence="1">Belongs to the FKBP-type PPIase family. Tig subfamily.</text>
</comment>
<name>TIG_LEUCK</name>
<accession>B1MXT7</accession>
<gene>
    <name evidence="1" type="primary">tig</name>
    <name type="ordered locus">LCK_00506</name>
</gene>
<evidence type="ECO:0000255" key="1">
    <source>
        <dbReference type="HAMAP-Rule" id="MF_00303"/>
    </source>
</evidence>
<proteinExistence type="inferred from homology"/>
<reference key="1">
    <citation type="journal article" date="2008" name="J. Bacteriol.">
        <title>Complete genome sequence of Leuconostoc citreum KM20.</title>
        <authorList>
            <person name="Kim J.F."/>
            <person name="Jeong H."/>
            <person name="Lee J.-S."/>
            <person name="Choi S.-H."/>
            <person name="Ha M."/>
            <person name="Hur C.-G."/>
            <person name="Kim J.-S."/>
            <person name="Lee S."/>
            <person name="Park H.-S."/>
            <person name="Park Y.-H."/>
            <person name="Oh T.K."/>
        </authorList>
    </citation>
    <scope>NUCLEOTIDE SEQUENCE [LARGE SCALE GENOMIC DNA]</scope>
    <source>
        <strain>KM20</strain>
    </source>
</reference>
<sequence length="431" mass="47243">MSNWTPAADQKNQGTLEFEISRAQVEEGLEKAFQRNKNQVSIPGFRKGKVTKALFFSKFGEEALYQEAMDIVLPAAYEAAVEEAGITPVGRPNIEPVSMNKGEAWTLKAEVTTAPAIKLGEYLNLEVAAEDTAVSDADVDAEIKRLQDGQAELVLQEESVKAEDGDTVVIDFDGSVDGDHFDGGQANDFSLALGSGQFIPGFEEQLVGHTAGEDVEVKVTFPEDYQAADLAGKEALFEVKIHELKRKELPELDDEFAKDVDEEVETLAELKEKTAKKLADDKEAAAKSAFEDAVITKAVDNASVDGDAIPDAMIEEDVHRQVDQYLGQLQQQGISREMFFQISGQTEEDLHKQFEEGAATRVKTNLVLEAIVKAEGIEPSAEQVTEEINNLATQYNMDAEQVRSSLSDSLLKHDIAMREVIKKITDSAKAK</sequence>
<feature type="chain" id="PRO_1000115550" description="Trigger factor">
    <location>
        <begin position="1"/>
        <end position="431"/>
    </location>
</feature>
<feature type="domain" description="PPIase FKBP-type" evidence="1">
    <location>
        <begin position="165"/>
        <end position="250"/>
    </location>
</feature>
<keyword id="KW-0131">Cell cycle</keyword>
<keyword id="KW-0132">Cell division</keyword>
<keyword id="KW-0143">Chaperone</keyword>
<keyword id="KW-0963">Cytoplasm</keyword>
<keyword id="KW-0413">Isomerase</keyword>
<keyword id="KW-1185">Reference proteome</keyword>
<keyword id="KW-0697">Rotamase</keyword>
<organism>
    <name type="scientific">Leuconostoc citreum (strain KM20)</name>
    <dbReference type="NCBI Taxonomy" id="349519"/>
    <lineage>
        <taxon>Bacteria</taxon>
        <taxon>Bacillati</taxon>
        <taxon>Bacillota</taxon>
        <taxon>Bacilli</taxon>
        <taxon>Lactobacillales</taxon>
        <taxon>Lactobacillaceae</taxon>
        <taxon>Leuconostoc</taxon>
    </lineage>
</organism>
<protein>
    <recommendedName>
        <fullName evidence="1">Trigger factor</fullName>
        <shortName evidence="1">TF</shortName>
        <ecNumber evidence="1">5.2.1.8</ecNumber>
    </recommendedName>
    <alternativeName>
        <fullName evidence="1">PPIase</fullName>
    </alternativeName>
</protein>